<organism>
    <name type="scientific">Streptomyces avermitilis (strain ATCC 31267 / DSM 46492 / JCM 5070 / NBRC 14893 / NCIMB 12804 / NRRL 8165 / MA-4680)</name>
    <dbReference type="NCBI Taxonomy" id="227882"/>
    <lineage>
        <taxon>Bacteria</taxon>
        <taxon>Bacillati</taxon>
        <taxon>Actinomycetota</taxon>
        <taxon>Actinomycetes</taxon>
        <taxon>Kitasatosporales</taxon>
        <taxon>Streptomycetaceae</taxon>
        <taxon>Streptomyces</taxon>
    </lineage>
</organism>
<feature type="chain" id="PRO_0000183451" description="Putative cytochrome c oxidase subunit 1-beta">
    <location>
        <begin position="1"/>
        <end position="563"/>
    </location>
</feature>
<feature type="transmembrane region" description="Helical" evidence="2">
    <location>
        <begin position="34"/>
        <end position="54"/>
    </location>
</feature>
<feature type="transmembrane region" description="Helical" evidence="2">
    <location>
        <begin position="76"/>
        <end position="96"/>
    </location>
</feature>
<feature type="transmembrane region" description="Helical" evidence="2">
    <location>
        <begin position="117"/>
        <end position="137"/>
    </location>
</feature>
<feature type="transmembrane region" description="Helical" evidence="2">
    <location>
        <begin position="164"/>
        <end position="184"/>
    </location>
</feature>
<feature type="transmembrane region" description="Helical" evidence="2">
    <location>
        <begin position="208"/>
        <end position="228"/>
    </location>
</feature>
<feature type="transmembrane region" description="Helical" evidence="2">
    <location>
        <begin position="252"/>
        <end position="272"/>
    </location>
</feature>
<feature type="transmembrane region" description="Helical" evidence="2">
    <location>
        <begin position="284"/>
        <end position="304"/>
    </location>
</feature>
<feature type="transmembrane region" description="Helical" evidence="2">
    <location>
        <begin position="309"/>
        <end position="329"/>
    </location>
</feature>
<feature type="transmembrane region" description="Helical" evidence="2">
    <location>
        <begin position="353"/>
        <end position="373"/>
    </location>
</feature>
<feature type="transmembrane region" description="Helical" evidence="2">
    <location>
        <begin position="392"/>
        <end position="412"/>
    </location>
</feature>
<feature type="transmembrane region" description="Helical" evidence="2">
    <location>
        <begin position="427"/>
        <end position="447"/>
    </location>
</feature>
<feature type="transmembrane region" description="Helical" evidence="2">
    <location>
        <begin position="470"/>
        <end position="490"/>
    </location>
</feature>
<feature type="region of interest" description="Disordered" evidence="3">
    <location>
        <begin position="536"/>
        <end position="563"/>
    </location>
</feature>
<feature type="compositionally biased region" description="Basic and acidic residues" evidence="3">
    <location>
        <begin position="552"/>
        <end position="563"/>
    </location>
</feature>
<feature type="binding site" description="axial binding residue" evidence="1">
    <location>
        <position position="80"/>
    </location>
    <ligand>
        <name>Fe(II)-heme a</name>
        <dbReference type="ChEBI" id="CHEBI:61715"/>
    </ligand>
    <ligandPart>
        <name>Fe</name>
        <dbReference type="ChEBI" id="CHEBI:18248"/>
    </ligandPart>
</feature>
<feature type="binding site" evidence="1">
    <location>
        <position position="258"/>
    </location>
    <ligand>
        <name>Cu cation</name>
        <dbReference type="ChEBI" id="CHEBI:23378"/>
        <label>B</label>
    </ligand>
</feature>
<feature type="binding site" evidence="1">
    <location>
        <position position="262"/>
    </location>
    <ligand>
        <name>Cu cation</name>
        <dbReference type="ChEBI" id="CHEBI:23378"/>
        <label>B</label>
    </ligand>
</feature>
<feature type="binding site" evidence="1">
    <location>
        <position position="307"/>
    </location>
    <ligand>
        <name>Cu cation</name>
        <dbReference type="ChEBI" id="CHEBI:23378"/>
        <label>B</label>
    </ligand>
</feature>
<feature type="binding site" evidence="1">
    <location>
        <position position="308"/>
    </location>
    <ligand>
        <name>Cu cation</name>
        <dbReference type="ChEBI" id="CHEBI:23378"/>
        <label>B</label>
    </ligand>
</feature>
<feature type="binding site" description="axial binding residue" evidence="1">
    <location>
        <position position="391"/>
    </location>
    <ligand>
        <name>heme a3</name>
        <dbReference type="ChEBI" id="CHEBI:83282"/>
    </ligand>
    <ligandPart>
        <name>Fe</name>
        <dbReference type="ChEBI" id="CHEBI:18248"/>
    </ligandPart>
</feature>
<feature type="binding site" description="axial binding residue" evidence="1">
    <location>
        <position position="393"/>
    </location>
    <ligand>
        <name>Fe(II)-heme a</name>
        <dbReference type="ChEBI" id="CHEBI:61715"/>
    </ligand>
    <ligandPart>
        <name>Fe</name>
        <dbReference type="ChEBI" id="CHEBI:18248"/>
    </ligandPart>
</feature>
<feature type="cross-link" description="1'-histidyl-3'-tyrosine (His-Tyr)" evidence="1">
    <location>
        <begin position="258"/>
        <end position="262"/>
    </location>
</feature>
<sequence>MGTDTAQATARPVRTQQPGRLIVDWLTTTDHKKIGHLYLITSFAFFLIGGVMALVMRAELARPGMQIVDNNQFNQLFTLHGTIMLLLFATPTFAGFANEIMPLQIGSPDVAFPRLNMLSYWLFLFGGLIVLGSLAVPSGPAAFGWFAYAPLNSLERSPGIGADMWIMGLALAGFGTILGSVNFLTTIIGMRAPGMTMFRMPIFTWNTLFTSILVLMAFPVLAAALLVLEADRRFGSQVFDAANGGALLWQHLFWFFGHPEVYIIALPFFGIITEIIPVFSRKPIFGYLTLIGATAAITGLSVVVWAHHMFATGAVLLPFFSFMSFLIAVPTGVKFFNWTGTMLKGSLSFETPMLWATGFLVSFLFGGLTGVILASPPLDFHVTDSYFVVAHFHYVVFGTVVFATFGGFYFWWPKFTGKMLDERLGKIHFWTLFVGFHTTFLVQHWLGAEGMPRRYADYLAADGFTALNTLSTIGAFLLGMSTLPFLYNVWKTARYGRKVEVDDPWGFGRSLEWTTSCPPPRHNFVTLPRVRSESPAFDLHHPAHAGEAPQPEPKHEQADREPS</sequence>
<accession>Q828X4</accession>
<evidence type="ECO:0000250" key="1"/>
<evidence type="ECO:0000255" key="2"/>
<evidence type="ECO:0000256" key="3">
    <source>
        <dbReference type="SAM" id="MobiDB-lite"/>
    </source>
</evidence>
<evidence type="ECO:0000305" key="4"/>
<keyword id="KW-1003">Cell membrane</keyword>
<keyword id="KW-0186">Copper</keyword>
<keyword id="KW-0249">Electron transport</keyword>
<keyword id="KW-0349">Heme</keyword>
<keyword id="KW-0408">Iron</keyword>
<keyword id="KW-0472">Membrane</keyword>
<keyword id="KW-0479">Metal-binding</keyword>
<keyword id="KW-1185">Reference proteome</keyword>
<keyword id="KW-0679">Respiratory chain</keyword>
<keyword id="KW-1278">Translocase</keyword>
<keyword id="KW-0812">Transmembrane</keyword>
<keyword id="KW-1133">Transmembrane helix</keyword>
<keyword id="KW-0813">Transport</keyword>
<gene>
    <name type="primary">ctaD2</name>
    <name type="ordered locus">SAV_6537</name>
</gene>
<proteinExistence type="inferred from homology"/>
<protein>
    <recommendedName>
        <fullName>Putative cytochrome c oxidase subunit 1-beta</fullName>
        <ecNumber>7.1.1.9</ecNumber>
    </recommendedName>
    <alternativeName>
        <fullName>Cytochrome aa3 subunit 1-beta</fullName>
    </alternativeName>
    <alternativeName>
        <fullName>Cytochrome c oxidase polypeptide I-beta</fullName>
    </alternativeName>
</protein>
<dbReference type="EC" id="7.1.1.9"/>
<dbReference type="EMBL" id="BA000030">
    <property type="protein sequence ID" value="BAC74248.1"/>
    <property type="molecule type" value="Genomic_DNA"/>
</dbReference>
<dbReference type="SMR" id="Q828X4"/>
<dbReference type="GeneID" id="41543610"/>
<dbReference type="KEGG" id="sma:SAVERM_6537"/>
<dbReference type="eggNOG" id="COG0843">
    <property type="taxonomic scope" value="Bacteria"/>
</dbReference>
<dbReference type="HOGENOM" id="CLU_011899_7_3_11"/>
<dbReference type="OrthoDB" id="9803294at2"/>
<dbReference type="UniPathway" id="UPA00705"/>
<dbReference type="Proteomes" id="UP000000428">
    <property type="component" value="Chromosome"/>
</dbReference>
<dbReference type="GO" id="GO:0005886">
    <property type="term" value="C:plasma membrane"/>
    <property type="evidence" value="ECO:0007669"/>
    <property type="project" value="UniProtKB-SubCell"/>
</dbReference>
<dbReference type="GO" id="GO:0004129">
    <property type="term" value="F:cytochrome-c oxidase activity"/>
    <property type="evidence" value="ECO:0007669"/>
    <property type="project" value="UniProtKB-EC"/>
</dbReference>
<dbReference type="GO" id="GO:0020037">
    <property type="term" value="F:heme binding"/>
    <property type="evidence" value="ECO:0007669"/>
    <property type="project" value="InterPro"/>
</dbReference>
<dbReference type="GO" id="GO:0046872">
    <property type="term" value="F:metal ion binding"/>
    <property type="evidence" value="ECO:0007669"/>
    <property type="project" value="UniProtKB-KW"/>
</dbReference>
<dbReference type="GO" id="GO:0015990">
    <property type="term" value="P:electron transport coupled proton transport"/>
    <property type="evidence" value="ECO:0007669"/>
    <property type="project" value="InterPro"/>
</dbReference>
<dbReference type="GO" id="GO:0006119">
    <property type="term" value="P:oxidative phosphorylation"/>
    <property type="evidence" value="ECO:0007669"/>
    <property type="project" value="UniProtKB-UniPathway"/>
</dbReference>
<dbReference type="GO" id="GO:0022904">
    <property type="term" value="P:respiratory electron transport chain"/>
    <property type="evidence" value="ECO:0007669"/>
    <property type="project" value="TreeGrafter"/>
</dbReference>
<dbReference type="CDD" id="cd01662">
    <property type="entry name" value="Ubiquinol_Oxidase_I"/>
    <property type="match status" value="1"/>
</dbReference>
<dbReference type="FunFam" id="1.20.210.10:FF:000003">
    <property type="entry name" value="Cytochrome c oxidase subunit 1"/>
    <property type="match status" value="1"/>
</dbReference>
<dbReference type="Gene3D" id="1.20.210.10">
    <property type="entry name" value="Cytochrome c oxidase-like, subunit I domain"/>
    <property type="match status" value="1"/>
</dbReference>
<dbReference type="InterPro" id="IPR023616">
    <property type="entry name" value="Cyt_c_oxase-like_su1_dom"/>
</dbReference>
<dbReference type="InterPro" id="IPR036927">
    <property type="entry name" value="Cyt_c_oxase-like_su1_sf"/>
</dbReference>
<dbReference type="InterPro" id="IPR000883">
    <property type="entry name" value="Cyt_C_Oxase_1"/>
</dbReference>
<dbReference type="InterPro" id="IPR023615">
    <property type="entry name" value="Cyt_c_Oxase_su1_BS"/>
</dbReference>
<dbReference type="InterPro" id="IPR014241">
    <property type="entry name" value="Cyt_c_oxidase_su1_bac"/>
</dbReference>
<dbReference type="NCBIfam" id="TIGR02891">
    <property type="entry name" value="CtaD_CoxA"/>
    <property type="match status" value="1"/>
</dbReference>
<dbReference type="PANTHER" id="PTHR10422">
    <property type="entry name" value="CYTOCHROME C OXIDASE SUBUNIT 1"/>
    <property type="match status" value="1"/>
</dbReference>
<dbReference type="PANTHER" id="PTHR10422:SF18">
    <property type="entry name" value="CYTOCHROME C OXIDASE SUBUNIT 1"/>
    <property type="match status" value="1"/>
</dbReference>
<dbReference type="Pfam" id="PF00115">
    <property type="entry name" value="COX1"/>
    <property type="match status" value="1"/>
</dbReference>
<dbReference type="PRINTS" id="PR01165">
    <property type="entry name" value="CYCOXIDASEI"/>
</dbReference>
<dbReference type="SUPFAM" id="SSF81442">
    <property type="entry name" value="Cytochrome c oxidase subunit I-like"/>
    <property type="match status" value="1"/>
</dbReference>
<dbReference type="PROSITE" id="PS50855">
    <property type="entry name" value="COX1"/>
    <property type="match status" value="1"/>
</dbReference>
<dbReference type="PROSITE" id="PS00077">
    <property type="entry name" value="COX1_CUB"/>
    <property type="match status" value="1"/>
</dbReference>
<comment type="function">
    <text evidence="1">Cytochrome c oxidase is the component of the respiratory chain that catalyzes the reduction of oxygen to water. Subunits 1-3 form the functional core of the enzyme complex. CO I is the catalytic subunit of the enzyme. Electrons originating in cytochrome c are transferred via the copper A center of subunit 2 and heme A of subunit 1 to the bimetallic center formed by heme A3 and copper B (By similarity).</text>
</comment>
<comment type="catalytic activity">
    <reaction>
        <text>4 Fe(II)-[cytochrome c] + O2 + 8 H(+)(in) = 4 Fe(III)-[cytochrome c] + 2 H2O + 4 H(+)(out)</text>
        <dbReference type="Rhea" id="RHEA:11436"/>
        <dbReference type="Rhea" id="RHEA-COMP:10350"/>
        <dbReference type="Rhea" id="RHEA-COMP:14399"/>
        <dbReference type="ChEBI" id="CHEBI:15377"/>
        <dbReference type="ChEBI" id="CHEBI:15378"/>
        <dbReference type="ChEBI" id="CHEBI:15379"/>
        <dbReference type="ChEBI" id="CHEBI:29033"/>
        <dbReference type="ChEBI" id="CHEBI:29034"/>
        <dbReference type="EC" id="7.1.1.9"/>
    </reaction>
</comment>
<comment type="cofactor">
    <cofactor evidence="1">
        <name>Cu(2+)</name>
        <dbReference type="ChEBI" id="CHEBI:29036"/>
    </cofactor>
    <text evidence="1">Binds 1 copper B ion per subunit.</text>
</comment>
<comment type="cofactor">
    <cofactor evidence="1">
        <name>heme</name>
        <dbReference type="ChEBI" id="CHEBI:30413"/>
    </cofactor>
    <text evidence="1">Binds 2 heme groups per subunit.</text>
</comment>
<comment type="pathway">
    <text>Energy metabolism; oxidative phosphorylation.</text>
</comment>
<comment type="subunit">
    <text evidence="1">Associates with subunits II, III and IV to form cytochrome c oxidase.</text>
</comment>
<comment type="subcellular location">
    <subcellularLocation>
        <location evidence="1">Cell membrane</location>
        <topology evidence="1">Multi-pass membrane protein</topology>
    </subcellularLocation>
</comment>
<comment type="similarity">
    <text evidence="4">Belongs to the heme-copper respiratory oxidase family.</text>
</comment>
<reference key="1">
    <citation type="journal article" date="2001" name="Proc. Natl. Acad. Sci. U.S.A.">
        <title>Genome sequence of an industrial microorganism Streptomyces avermitilis: deducing the ability of producing secondary metabolites.</title>
        <authorList>
            <person name="Omura S."/>
            <person name="Ikeda H."/>
            <person name="Ishikawa J."/>
            <person name="Hanamoto A."/>
            <person name="Takahashi C."/>
            <person name="Shinose M."/>
            <person name="Takahashi Y."/>
            <person name="Horikawa H."/>
            <person name="Nakazawa H."/>
            <person name="Osonoe T."/>
            <person name="Kikuchi H."/>
            <person name="Shiba T."/>
            <person name="Sakaki Y."/>
            <person name="Hattori M."/>
        </authorList>
    </citation>
    <scope>NUCLEOTIDE SEQUENCE [LARGE SCALE GENOMIC DNA]</scope>
    <source>
        <strain>ATCC 31267 / DSM 46492 / JCM 5070 / NBRC 14893 / NCIMB 12804 / NRRL 8165 / MA-4680</strain>
    </source>
</reference>
<reference key="2">
    <citation type="journal article" date="2003" name="Nat. Biotechnol.">
        <title>Complete genome sequence and comparative analysis of the industrial microorganism Streptomyces avermitilis.</title>
        <authorList>
            <person name="Ikeda H."/>
            <person name="Ishikawa J."/>
            <person name="Hanamoto A."/>
            <person name="Shinose M."/>
            <person name="Kikuchi H."/>
            <person name="Shiba T."/>
            <person name="Sakaki Y."/>
            <person name="Hattori M."/>
            <person name="Omura S."/>
        </authorList>
    </citation>
    <scope>NUCLEOTIDE SEQUENCE [LARGE SCALE GENOMIC DNA]</scope>
    <source>
        <strain>ATCC 31267 / DSM 46492 / JCM 5070 / NBRC 14893 / NCIMB 12804 / NRRL 8165 / MA-4680</strain>
    </source>
</reference>
<name>COX1B_STRAW</name>